<feature type="chain" id="PRO_1000011485" description="4-hydroxy-3-methylbut-2-en-1-yl diphosphate synthase (flavodoxin)">
    <location>
        <begin position="1"/>
        <end position="387"/>
    </location>
</feature>
<feature type="binding site" evidence="1">
    <location>
        <position position="280"/>
    </location>
    <ligand>
        <name>[4Fe-4S] cluster</name>
        <dbReference type="ChEBI" id="CHEBI:49883"/>
    </ligand>
</feature>
<feature type="binding site" evidence="1">
    <location>
        <position position="283"/>
    </location>
    <ligand>
        <name>[4Fe-4S] cluster</name>
        <dbReference type="ChEBI" id="CHEBI:49883"/>
    </ligand>
</feature>
<feature type="binding site" evidence="1">
    <location>
        <position position="315"/>
    </location>
    <ligand>
        <name>[4Fe-4S] cluster</name>
        <dbReference type="ChEBI" id="CHEBI:49883"/>
    </ligand>
</feature>
<feature type="binding site" evidence="1">
    <location>
        <position position="322"/>
    </location>
    <ligand>
        <name>[4Fe-4S] cluster</name>
        <dbReference type="ChEBI" id="CHEBI:49883"/>
    </ligand>
</feature>
<organism>
    <name type="scientific">Mycobacterium tuberculosis (strain ATCC 25177 / H37Ra)</name>
    <dbReference type="NCBI Taxonomy" id="419947"/>
    <lineage>
        <taxon>Bacteria</taxon>
        <taxon>Bacillati</taxon>
        <taxon>Actinomycetota</taxon>
        <taxon>Actinomycetes</taxon>
        <taxon>Mycobacteriales</taxon>
        <taxon>Mycobacteriaceae</taxon>
        <taxon>Mycobacterium</taxon>
        <taxon>Mycobacterium tuberculosis complex</taxon>
    </lineage>
</organism>
<gene>
    <name evidence="1" type="primary">ispG</name>
    <name type="ordered locus">MRA_2893</name>
</gene>
<proteinExistence type="inferred from homology"/>
<accession>A5U6M2</accession>
<evidence type="ECO:0000255" key="1">
    <source>
        <dbReference type="HAMAP-Rule" id="MF_00159"/>
    </source>
</evidence>
<sequence length="387" mass="40482">MTVGLGMPQPPAPTLAPRRATRQLMVGNVGVGSDHPVSVQSMCTTKTHDVNSTLQQIAELTAAGCDIVRVACPRQEDADALAEIARHSQIPVVADIHFQPRYIFAAIDAGCAAVRVNPGNIKEFDGRVGEVAKAAGAAGIPIRIGVNAGSLDKRFMEKYGKATPEALVESALWEASLFEEHGFGDIKISVKHNDPVVMVAAYELLAARCDYPLHLGVTEAGPAFQGTIKSAVAFGALLSRGIGDTIRVSLSAPPVEEVKVGNQVLESLNLRPRSLEIVSCPSCGRAQVDVYTLANEVTAGLDGLDVPLRVAVMGCVVNGPGEAREADLGVASGNGKGQIFVRGEVIKTVPEAQIVETLIEEAMRLAAEMGEQDPGATPSGSPIVTVS</sequence>
<dbReference type="EC" id="1.17.7.3" evidence="1"/>
<dbReference type="EMBL" id="CP000611">
    <property type="protein sequence ID" value="ABQ74672.1"/>
    <property type="molecule type" value="Genomic_DNA"/>
</dbReference>
<dbReference type="RefSeq" id="WP_003899517.1">
    <property type="nucleotide sequence ID" value="NZ_CP016972.1"/>
</dbReference>
<dbReference type="SMR" id="A5U6M2"/>
<dbReference type="KEGG" id="mra:MRA_2893"/>
<dbReference type="eggNOG" id="COG0821">
    <property type="taxonomic scope" value="Bacteria"/>
</dbReference>
<dbReference type="HOGENOM" id="CLU_042258_0_0_11"/>
<dbReference type="UniPathway" id="UPA00056">
    <property type="reaction ID" value="UER00096"/>
</dbReference>
<dbReference type="Proteomes" id="UP000001988">
    <property type="component" value="Chromosome"/>
</dbReference>
<dbReference type="GO" id="GO:0051539">
    <property type="term" value="F:4 iron, 4 sulfur cluster binding"/>
    <property type="evidence" value="ECO:0007669"/>
    <property type="project" value="UniProtKB-UniRule"/>
</dbReference>
<dbReference type="GO" id="GO:0046429">
    <property type="term" value="F:4-hydroxy-3-methylbut-2-en-1-yl diphosphate synthase activity (ferredoxin)"/>
    <property type="evidence" value="ECO:0007669"/>
    <property type="project" value="UniProtKB-UniRule"/>
</dbReference>
<dbReference type="GO" id="GO:0141197">
    <property type="term" value="F:4-hydroxy-3-methylbut-2-enyl-diphosphate synthase activity (flavodoxin)"/>
    <property type="evidence" value="ECO:0007669"/>
    <property type="project" value="UniProtKB-EC"/>
</dbReference>
<dbReference type="GO" id="GO:0005506">
    <property type="term" value="F:iron ion binding"/>
    <property type="evidence" value="ECO:0007669"/>
    <property type="project" value="InterPro"/>
</dbReference>
<dbReference type="GO" id="GO:0019288">
    <property type="term" value="P:isopentenyl diphosphate biosynthetic process, methylerythritol 4-phosphate pathway"/>
    <property type="evidence" value="ECO:0007669"/>
    <property type="project" value="UniProtKB-UniRule"/>
</dbReference>
<dbReference type="GO" id="GO:0016114">
    <property type="term" value="P:terpenoid biosynthetic process"/>
    <property type="evidence" value="ECO:0007669"/>
    <property type="project" value="InterPro"/>
</dbReference>
<dbReference type="FunFam" id="3.20.20.20:FF:000003">
    <property type="entry name" value="4-hydroxy-3-methylbut-2-en-1-yl diphosphate synthase (flavodoxin)"/>
    <property type="match status" value="1"/>
</dbReference>
<dbReference type="FunFam" id="3.30.413.10:FF:000001">
    <property type="entry name" value="4-hydroxy-3-methylbut-2-en-1-yl diphosphate synthase (flavodoxin)"/>
    <property type="match status" value="1"/>
</dbReference>
<dbReference type="Gene3D" id="3.20.20.20">
    <property type="entry name" value="Dihydropteroate synthase-like"/>
    <property type="match status" value="1"/>
</dbReference>
<dbReference type="Gene3D" id="3.30.413.10">
    <property type="entry name" value="Sulfite Reductase Hemoprotein, domain 1"/>
    <property type="match status" value="1"/>
</dbReference>
<dbReference type="HAMAP" id="MF_00159">
    <property type="entry name" value="IspG"/>
    <property type="match status" value="1"/>
</dbReference>
<dbReference type="InterPro" id="IPR011005">
    <property type="entry name" value="Dihydropteroate_synth-like_sf"/>
</dbReference>
<dbReference type="InterPro" id="IPR016425">
    <property type="entry name" value="IspG_bac"/>
</dbReference>
<dbReference type="InterPro" id="IPR004588">
    <property type="entry name" value="IspG_bac-typ"/>
</dbReference>
<dbReference type="InterPro" id="IPR045854">
    <property type="entry name" value="NO2/SO3_Rdtase_4Fe4S_sf"/>
</dbReference>
<dbReference type="NCBIfam" id="TIGR00612">
    <property type="entry name" value="ispG_gcpE"/>
    <property type="match status" value="1"/>
</dbReference>
<dbReference type="NCBIfam" id="NF001540">
    <property type="entry name" value="PRK00366.1"/>
    <property type="match status" value="1"/>
</dbReference>
<dbReference type="PANTHER" id="PTHR30454">
    <property type="entry name" value="4-HYDROXY-3-METHYLBUT-2-EN-1-YL DIPHOSPHATE SYNTHASE"/>
    <property type="match status" value="1"/>
</dbReference>
<dbReference type="PANTHER" id="PTHR30454:SF0">
    <property type="entry name" value="4-HYDROXY-3-METHYLBUT-2-EN-1-YL DIPHOSPHATE SYNTHASE (FERREDOXIN), CHLOROPLASTIC"/>
    <property type="match status" value="1"/>
</dbReference>
<dbReference type="Pfam" id="PF04551">
    <property type="entry name" value="GcpE"/>
    <property type="match status" value="1"/>
</dbReference>
<dbReference type="PIRSF" id="PIRSF004640">
    <property type="entry name" value="IspG"/>
    <property type="match status" value="1"/>
</dbReference>
<dbReference type="SUPFAM" id="SSF51717">
    <property type="entry name" value="Dihydropteroate synthetase-like"/>
    <property type="match status" value="1"/>
</dbReference>
<dbReference type="SUPFAM" id="SSF56014">
    <property type="entry name" value="Nitrite and sulphite reductase 4Fe-4S domain-like"/>
    <property type="match status" value="1"/>
</dbReference>
<reference key="1">
    <citation type="journal article" date="2008" name="PLoS ONE">
        <title>Genetic basis of virulence attenuation revealed by comparative genomic analysis of Mycobacterium tuberculosis strain H37Ra versus H37Rv.</title>
        <authorList>
            <person name="Zheng H."/>
            <person name="Lu L."/>
            <person name="Wang B."/>
            <person name="Pu S."/>
            <person name="Zhang X."/>
            <person name="Zhu G."/>
            <person name="Shi W."/>
            <person name="Zhang L."/>
            <person name="Wang H."/>
            <person name="Wang S."/>
            <person name="Zhao G."/>
            <person name="Zhang Y."/>
        </authorList>
    </citation>
    <scope>NUCLEOTIDE SEQUENCE [LARGE SCALE GENOMIC DNA]</scope>
    <source>
        <strain>ATCC 25177 / H37Ra</strain>
    </source>
</reference>
<keyword id="KW-0004">4Fe-4S</keyword>
<keyword id="KW-0408">Iron</keyword>
<keyword id="KW-0411">Iron-sulfur</keyword>
<keyword id="KW-0414">Isoprene biosynthesis</keyword>
<keyword id="KW-0479">Metal-binding</keyword>
<keyword id="KW-0560">Oxidoreductase</keyword>
<keyword id="KW-1185">Reference proteome</keyword>
<name>ISPG_MYCTA</name>
<comment type="function">
    <text evidence="1">Converts 2C-methyl-D-erythritol 2,4-cyclodiphosphate (ME-2,4cPP) into 1-hydroxy-2-methyl-2-(E)-butenyl 4-diphosphate.</text>
</comment>
<comment type="catalytic activity">
    <reaction evidence="1">
        <text>(2E)-4-hydroxy-3-methylbut-2-enyl diphosphate + oxidized [flavodoxin] + H2O + 2 H(+) = 2-C-methyl-D-erythritol 2,4-cyclic diphosphate + reduced [flavodoxin]</text>
        <dbReference type="Rhea" id="RHEA:43604"/>
        <dbReference type="Rhea" id="RHEA-COMP:10622"/>
        <dbReference type="Rhea" id="RHEA-COMP:10623"/>
        <dbReference type="ChEBI" id="CHEBI:15377"/>
        <dbReference type="ChEBI" id="CHEBI:15378"/>
        <dbReference type="ChEBI" id="CHEBI:57618"/>
        <dbReference type="ChEBI" id="CHEBI:58210"/>
        <dbReference type="ChEBI" id="CHEBI:58483"/>
        <dbReference type="ChEBI" id="CHEBI:128753"/>
        <dbReference type="EC" id="1.17.7.3"/>
    </reaction>
</comment>
<comment type="cofactor">
    <cofactor evidence="1">
        <name>[4Fe-4S] cluster</name>
        <dbReference type="ChEBI" id="CHEBI:49883"/>
    </cofactor>
    <text evidence="1">Binds 1 [4Fe-4S] cluster.</text>
</comment>
<comment type="pathway">
    <text evidence="1">Isoprenoid biosynthesis; isopentenyl diphosphate biosynthesis via DXP pathway; isopentenyl diphosphate from 1-deoxy-D-xylulose 5-phosphate: step 5/6.</text>
</comment>
<comment type="similarity">
    <text evidence="1">Belongs to the IspG family.</text>
</comment>
<protein>
    <recommendedName>
        <fullName evidence="1">4-hydroxy-3-methylbut-2-en-1-yl diphosphate synthase (flavodoxin)</fullName>
        <ecNumber evidence="1">1.17.7.3</ecNumber>
    </recommendedName>
    <alternativeName>
        <fullName evidence="1">1-hydroxy-2-methyl-2-(E)-butenyl 4-diphosphate synthase</fullName>
    </alternativeName>
</protein>